<evidence type="ECO:0000255" key="1">
    <source>
        <dbReference type="HAMAP-Rule" id="MF_00436"/>
    </source>
</evidence>
<evidence type="ECO:0000255" key="2">
    <source>
        <dbReference type="PROSITE-ProRule" id="PRU01346"/>
    </source>
</evidence>
<evidence type="ECO:0000256" key="3">
    <source>
        <dbReference type="SAM" id="MobiDB-lite"/>
    </source>
</evidence>
<keyword id="KW-0694">RNA-binding</keyword>
<keyword id="KW-0346">Stress response</keyword>
<sequence>MAKGQSLQDPFLNALRRERVPVSIYLVNGIKLQGQIESFDQFVILLKNTVSQMVYKHAISTVVPSRPVSHHSNNAGGGTSSNYHHGSSAQNTSAQQDSEETE</sequence>
<organism>
    <name type="scientific">Shigella boydii serotype 4 (strain Sb227)</name>
    <dbReference type="NCBI Taxonomy" id="300268"/>
    <lineage>
        <taxon>Bacteria</taxon>
        <taxon>Pseudomonadati</taxon>
        <taxon>Pseudomonadota</taxon>
        <taxon>Gammaproteobacteria</taxon>
        <taxon>Enterobacterales</taxon>
        <taxon>Enterobacteriaceae</taxon>
        <taxon>Shigella</taxon>
    </lineage>
</organism>
<comment type="function">
    <text evidence="1">RNA chaperone that binds small regulatory RNA (sRNAs) and mRNAs to facilitate mRNA translational regulation in response to envelope stress, environmental stress and changes in metabolite concentrations. Also binds with high specificity to tRNAs.</text>
</comment>
<comment type="subunit">
    <text evidence="1">Homohexamer.</text>
</comment>
<comment type="similarity">
    <text evidence="1">Belongs to the Hfq family.</text>
</comment>
<protein>
    <recommendedName>
        <fullName evidence="1">RNA-binding protein Hfq</fullName>
    </recommendedName>
</protein>
<feature type="chain" id="PRO_0000265191" description="RNA-binding protein Hfq">
    <location>
        <begin position="1"/>
        <end position="102"/>
    </location>
</feature>
<feature type="domain" description="Sm" evidence="2">
    <location>
        <begin position="9"/>
        <end position="68"/>
    </location>
</feature>
<feature type="region of interest" description="Disordered" evidence="3">
    <location>
        <begin position="63"/>
        <end position="102"/>
    </location>
</feature>
<feature type="compositionally biased region" description="Polar residues" evidence="3">
    <location>
        <begin position="70"/>
        <end position="96"/>
    </location>
</feature>
<proteinExistence type="inferred from homology"/>
<gene>
    <name evidence="1" type="primary">hfq</name>
    <name type="ordered locus">SBO_4284</name>
</gene>
<accession>Q31TA2</accession>
<reference key="1">
    <citation type="journal article" date="2005" name="Nucleic Acids Res.">
        <title>Genome dynamics and diversity of Shigella species, the etiologic agents of bacillary dysentery.</title>
        <authorList>
            <person name="Yang F."/>
            <person name="Yang J."/>
            <person name="Zhang X."/>
            <person name="Chen L."/>
            <person name="Jiang Y."/>
            <person name="Yan Y."/>
            <person name="Tang X."/>
            <person name="Wang J."/>
            <person name="Xiong Z."/>
            <person name="Dong J."/>
            <person name="Xue Y."/>
            <person name="Zhu Y."/>
            <person name="Xu X."/>
            <person name="Sun L."/>
            <person name="Chen S."/>
            <person name="Nie H."/>
            <person name="Peng J."/>
            <person name="Xu J."/>
            <person name="Wang Y."/>
            <person name="Yuan Z."/>
            <person name="Wen Y."/>
            <person name="Yao Z."/>
            <person name="Shen Y."/>
            <person name="Qiang B."/>
            <person name="Hou Y."/>
            <person name="Yu J."/>
            <person name="Jin Q."/>
        </authorList>
    </citation>
    <scope>NUCLEOTIDE SEQUENCE [LARGE SCALE GENOMIC DNA]</scope>
    <source>
        <strain>Sb227</strain>
    </source>
</reference>
<name>HFQ_SHIBS</name>
<dbReference type="EMBL" id="CP000036">
    <property type="protein sequence ID" value="ABB68706.1"/>
    <property type="molecule type" value="Genomic_DNA"/>
</dbReference>
<dbReference type="RefSeq" id="WP_001051883.1">
    <property type="nucleotide sequence ID" value="NC_007613.1"/>
</dbReference>
<dbReference type="SMR" id="Q31TA2"/>
<dbReference type="GeneID" id="93777649"/>
<dbReference type="KEGG" id="sbo:SBO_4284"/>
<dbReference type="HOGENOM" id="CLU_113688_2_1_6"/>
<dbReference type="Proteomes" id="UP000007067">
    <property type="component" value="Chromosome"/>
</dbReference>
<dbReference type="GO" id="GO:0005829">
    <property type="term" value="C:cytosol"/>
    <property type="evidence" value="ECO:0007669"/>
    <property type="project" value="TreeGrafter"/>
</dbReference>
<dbReference type="GO" id="GO:0003723">
    <property type="term" value="F:RNA binding"/>
    <property type="evidence" value="ECO:0007669"/>
    <property type="project" value="UniProtKB-UniRule"/>
</dbReference>
<dbReference type="GO" id="GO:0006355">
    <property type="term" value="P:regulation of DNA-templated transcription"/>
    <property type="evidence" value="ECO:0007669"/>
    <property type="project" value="InterPro"/>
</dbReference>
<dbReference type="GO" id="GO:0043487">
    <property type="term" value="P:regulation of RNA stability"/>
    <property type="evidence" value="ECO:0007669"/>
    <property type="project" value="TreeGrafter"/>
</dbReference>
<dbReference type="GO" id="GO:0045974">
    <property type="term" value="P:regulation of translation, ncRNA-mediated"/>
    <property type="evidence" value="ECO:0007669"/>
    <property type="project" value="TreeGrafter"/>
</dbReference>
<dbReference type="CDD" id="cd01716">
    <property type="entry name" value="Hfq"/>
    <property type="match status" value="1"/>
</dbReference>
<dbReference type="FunFam" id="2.30.30.100:FF:000001">
    <property type="entry name" value="RNA-binding protein Hfq"/>
    <property type="match status" value="1"/>
</dbReference>
<dbReference type="Gene3D" id="2.30.30.100">
    <property type="match status" value="1"/>
</dbReference>
<dbReference type="HAMAP" id="MF_00436">
    <property type="entry name" value="Hfq"/>
    <property type="match status" value="1"/>
</dbReference>
<dbReference type="InterPro" id="IPR005001">
    <property type="entry name" value="Hfq"/>
</dbReference>
<dbReference type="InterPro" id="IPR010920">
    <property type="entry name" value="LSM_dom_sf"/>
</dbReference>
<dbReference type="InterPro" id="IPR047575">
    <property type="entry name" value="Sm"/>
</dbReference>
<dbReference type="NCBIfam" id="TIGR02383">
    <property type="entry name" value="Hfq"/>
    <property type="match status" value="1"/>
</dbReference>
<dbReference type="NCBIfam" id="NF001602">
    <property type="entry name" value="PRK00395.1"/>
    <property type="match status" value="1"/>
</dbReference>
<dbReference type="PANTHER" id="PTHR34772">
    <property type="entry name" value="RNA-BINDING PROTEIN HFQ"/>
    <property type="match status" value="1"/>
</dbReference>
<dbReference type="PANTHER" id="PTHR34772:SF1">
    <property type="entry name" value="RNA-BINDING PROTEIN HFQ"/>
    <property type="match status" value="1"/>
</dbReference>
<dbReference type="Pfam" id="PF17209">
    <property type="entry name" value="Hfq"/>
    <property type="match status" value="1"/>
</dbReference>
<dbReference type="SUPFAM" id="SSF50182">
    <property type="entry name" value="Sm-like ribonucleoproteins"/>
    <property type="match status" value="1"/>
</dbReference>
<dbReference type="PROSITE" id="PS52002">
    <property type="entry name" value="SM"/>
    <property type="match status" value="1"/>
</dbReference>